<protein>
    <recommendedName>
        <fullName>Probable WRKY transcription factor 75</fullName>
    </recommendedName>
    <alternativeName>
        <fullName>WRKY DNA-binding protein 75</fullName>
    </alternativeName>
</protein>
<accession>Q9FYA2</accession>
<reference key="1">
    <citation type="submission" date="2001-11" db="EMBL/GenBank/DDBJ databases">
        <title>Arabidopsis thaliana transcription factor WRKY75.</title>
        <authorList>
            <person name="Kushnir S."/>
            <person name="Ulker B."/>
            <person name="Somssich I.E."/>
        </authorList>
    </citation>
    <scope>NUCLEOTIDE SEQUENCE [MRNA]</scope>
    <source>
        <strain>cv. Columbia</strain>
        <tissue>Flower</tissue>
    </source>
</reference>
<reference key="2">
    <citation type="journal article" date="2000" name="Nature">
        <title>Sequence and analysis of chromosome 5 of the plant Arabidopsis thaliana.</title>
        <authorList>
            <person name="Tabata S."/>
            <person name="Kaneko T."/>
            <person name="Nakamura Y."/>
            <person name="Kotani H."/>
            <person name="Kato T."/>
            <person name="Asamizu E."/>
            <person name="Miyajima N."/>
            <person name="Sasamoto S."/>
            <person name="Kimura T."/>
            <person name="Hosouchi T."/>
            <person name="Kawashima K."/>
            <person name="Kohara M."/>
            <person name="Matsumoto M."/>
            <person name="Matsuno A."/>
            <person name="Muraki A."/>
            <person name="Nakayama S."/>
            <person name="Nakazaki N."/>
            <person name="Naruo K."/>
            <person name="Okumura S."/>
            <person name="Shinpo S."/>
            <person name="Takeuchi C."/>
            <person name="Wada T."/>
            <person name="Watanabe A."/>
            <person name="Yamada M."/>
            <person name="Yasuda M."/>
            <person name="Sato S."/>
            <person name="de la Bastide M."/>
            <person name="Huang E."/>
            <person name="Spiegel L."/>
            <person name="Gnoj L."/>
            <person name="O'Shaughnessy A."/>
            <person name="Preston R."/>
            <person name="Habermann K."/>
            <person name="Murray J."/>
            <person name="Johnson D."/>
            <person name="Rohlfing T."/>
            <person name="Nelson J."/>
            <person name="Stoneking T."/>
            <person name="Pepin K."/>
            <person name="Spieth J."/>
            <person name="Sekhon M."/>
            <person name="Armstrong J."/>
            <person name="Becker M."/>
            <person name="Belter E."/>
            <person name="Cordum H."/>
            <person name="Cordes M."/>
            <person name="Courtney L."/>
            <person name="Courtney W."/>
            <person name="Dante M."/>
            <person name="Du H."/>
            <person name="Edwards J."/>
            <person name="Fryman J."/>
            <person name="Haakensen B."/>
            <person name="Lamar E."/>
            <person name="Latreille P."/>
            <person name="Leonard S."/>
            <person name="Meyer R."/>
            <person name="Mulvaney E."/>
            <person name="Ozersky P."/>
            <person name="Riley A."/>
            <person name="Strowmatt C."/>
            <person name="Wagner-McPherson C."/>
            <person name="Wollam A."/>
            <person name="Yoakum M."/>
            <person name="Bell M."/>
            <person name="Dedhia N."/>
            <person name="Parnell L."/>
            <person name="Shah R."/>
            <person name="Rodriguez M."/>
            <person name="Hoon See L."/>
            <person name="Vil D."/>
            <person name="Baker J."/>
            <person name="Kirchoff K."/>
            <person name="Toth K."/>
            <person name="King L."/>
            <person name="Bahret A."/>
            <person name="Miller B."/>
            <person name="Marra M.A."/>
            <person name="Martienssen R."/>
            <person name="McCombie W.R."/>
            <person name="Wilson R.K."/>
            <person name="Murphy G."/>
            <person name="Bancroft I."/>
            <person name="Volckaert G."/>
            <person name="Wambutt R."/>
            <person name="Duesterhoeft A."/>
            <person name="Stiekema W."/>
            <person name="Pohl T."/>
            <person name="Entian K.-D."/>
            <person name="Terryn N."/>
            <person name="Hartley N."/>
            <person name="Bent E."/>
            <person name="Johnson S."/>
            <person name="Langham S.-A."/>
            <person name="McCullagh B."/>
            <person name="Robben J."/>
            <person name="Grymonprez B."/>
            <person name="Zimmermann W."/>
            <person name="Ramsperger U."/>
            <person name="Wedler H."/>
            <person name="Balke K."/>
            <person name="Wedler E."/>
            <person name="Peters S."/>
            <person name="van Staveren M."/>
            <person name="Dirkse W."/>
            <person name="Mooijman P."/>
            <person name="Klein Lankhorst R."/>
            <person name="Weitzenegger T."/>
            <person name="Bothe G."/>
            <person name="Rose M."/>
            <person name="Hauf J."/>
            <person name="Berneiser S."/>
            <person name="Hempel S."/>
            <person name="Feldpausch M."/>
            <person name="Lamberth S."/>
            <person name="Villarroel R."/>
            <person name="Gielen J."/>
            <person name="Ardiles W."/>
            <person name="Bents O."/>
            <person name="Lemcke K."/>
            <person name="Kolesov G."/>
            <person name="Mayer K.F.X."/>
            <person name="Rudd S."/>
            <person name="Schoof H."/>
            <person name="Schueller C."/>
            <person name="Zaccaria P."/>
            <person name="Mewes H.-W."/>
            <person name="Bevan M."/>
            <person name="Fransz P.F."/>
        </authorList>
    </citation>
    <scope>NUCLEOTIDE SEQUENCE [LARGE SCALE GENOMIC DNA]</scope>
    <source>
        <strain>cv. Columbia</strain>
    </source>
</reference>
<reference key="3">
    <citation type="journal article" date="2017" name="Plant J.">
        <title>Araport11: a complete reannotation of the Arabidopsis thaliana reference genome.</title>
        <authorList>
            <person name="Cheng C.Y."/>
            <person name="Krishnakumar V."/>
            <person name="Chan A.P."/>
            <person name="Thibaud-Nissen F."/>
            <person name="Schobel S."/>
            <person name="Town C.D."/>
        </authorList>
    </citation>
    <scope>GENOME REANNOTATION</scope>
    <source>
        <strain>cv. Columbia</strain>
    </source>
</reference>
<reference key="4">
    <citation type="journal article" date="2003" name="Science">
        <title>Empirical analysis of transcriptional activity in the Arabidopsis genome.</title>
        <authorList>
            <person name="Yamada K."/>
            <person name="Lim J."/>
            <person name="Dale J.M."/>
            <person name="Chen H."/>
            <person name="Shinn P."/>
            <person name="Palm C.J."/>
            <person name="Southwick A.M."/>
            <person name="Wu H.C."/>
            <person name="Kim C.J."/>
            <person name="Nguyen M."/>
            <person name="Pham P.K."/>
            <person name="Cheuk R.F."/>
            <person name="Karlin-Newmann G."/>
            <person name="Liu S.X."/>
            <person name="Lam B."/>
            <person name="Sakano H."/>
            <person name="Wu T."/>
            <person name="Yu G."/>
            <person name="Miranda M."/>
            <person name="Quach H.L."/>
            <person name="Tripp M."/>
            <person name="Chang C.H."/>
            <person name="Lee J.M."/>
            <person name="Toriumi M.J."/>
            <person name="Chan M.M."/>
            <person name="Tang C.C."/>
            <person name="Onodera C.S."/>
            <person name="Deng J.M."/>
            <person name="Akiyama K."/>
            <person name="Ansari Y."/>
            <person name="Arakawa T."/>
            <person name="Banh J."/>
            <person name="Banno F."/>
            <person name="Bowser L."/>
            <person name="Brooks S.Y."/>
            <person name="Carninci P."/>
            <person name="Chao Q."/>
            <person name="Choy N."/>
            <person name="Enju A."/>
            <person name="Goldsmith A.D."/>
            <person name="Gurjal M."/>
            <person name="Hansen N.F."/>
            <person name="Hayashizaki Y."/>
            <person name="Johnson-Hopson C."/>
            <person name="Hsuan V.W."/>
            <person name="Iida K."/>
            <person name="Karnes M."/>
            <person name="Khan S."/>
            <person name="Koesema E."/>
            <person name="Ishida J."/>
            <person name="Jiang P.X."/>
            <person name="Jones T."/>
            <person name="Kawai J."/>
            <person name="Kamiya A."/>
            <person name="Meyers C."/>
            <person name="Nakajima M."/>
            <person name="Narusaka M."/>
            <person name="Seki M."/>
            <person name="Sakurai T."/>
            <person name="Satou M."/>
            <person name="Tamse R."/>
            <person name="Vaysberg M."/>
            <person name="Wallender E.K."/>
            <person name="Wong C."/>
            <person name="Yamamura Y."/>
            <person name="Yuan S."/>
            <person name="Shinozaki K."/>
            <person name="Davis R.W."/>
            <person name="Theologis A."/>
            <person name="Ecker J.R."/>
        </authorList>
    </citation>
    <scope>NUCLEOTIDE SEQUENCE [LARGE SCALE MRNA]</scope>
    <source>
        <strain>cv. Columbia</strain>
    </source>
</reference>
<proteinExistence type="evidence at protein level"/>
<feature type="chain" id="PRO_0000133715" description="Probable WRKY transcription factor 75">
    <location>
        <begin position="1"/>
        <end position="145"/>
    </location>
</feature>
<feature type="DNA-binding region" description="WRKY" evidence="2">
    <location>
        <begin position="61"/>
        <end position="126"/>
    </location>
</feature>
<feature type="region of interest" description="Disordered" evidence="3">
    <location>
        <begin position="20"/>
        <end position="55"/>
    </location>
</feature>
<feature type="compositionally biased region" description="Basic and acidic residues" evidence="3">
    <location>
        <begin position="20"/>
        <end position="38"/>
    </location>
</feature>
<dbReference type="EMBL" id="AF452174">
    <property type="protein sequence ID" value="AAL50784.1"/>
    <property type="molecule type" value="mRNA"/>
</dbReference>
<dbReference type="EMBL" id="AL391711">
    <property type="protein sequence ID" value="CAC05436.1"/>
    <property type="molecule type" value="Genomic_DNA"/>
</dbReference>
<dbReference type="EMBL" id="CP002688">
    <property type="protein sequence ID" value="AED91848.1"/>
    <property type="molecule type" value="Genomic_DNA"/>
</dbReference>
<dbReference type="EMBL" id="BT002426">
    <property type="protein sequence ID" value="AAO00786.1"/>
    <property type="molecule type" value="mRNA"/>
</dbReference>
<dbReference type="EMBL" id="BT006530">
    <property type="protein sequence ID" value="AAP21338.1"/>
    <property type="molecule type" value="mRNA"/>
</dbReference>
<dbReference type="RefSeq" id="NP_196812.1">
    <property type="nucleotide sequence ID" value="NM_121311.5"/>
</dbReference>
<dbReference type="SMR" id="Q9FYA2"/>
<dbReference type="BioGRID" id="16425">
    <property type="interactions" value="11"/>
</dbReference>
<dbReference type="FunCoup" id="Q9FYA2">
    <property type="interactions" value="9"/>
</dbReference>
<dbReference type="IntAct" id="Q9FYA2">
    <property type="interactions" value="10"/>
</dbReference>
<dbReference type="STRING" id="3702.Q9FYA2"/>
<dbReference type="PaxDb" id="3702-AT5G13080.1"/>
<dbReference type="ProteomicsDB" id="234177"/>
<dbReference type="EnsemblPlants" id="AT5G13080.1">
    <property type="protein sequence ID" value="AT5G13080.1"/>
    <property type="gene ID" value="AT5G13080"/>
</dbReference>
<dbReference type="GeneID" id="831147"/>
<dbReference type="Gramene" id="AT5G13080.1">
    <property type="protein sequence ID" value="AT5G13080.1"/>
    <property type="gene ID" value="AT5G13080"/>
</dbReference>
<dbReference type="KEGG" id="ath:AT5G13080"/>
<dbReference type="Araport" id="AT5G13080"/>
<dbReference type="TAIR" id="AT5G13080">
    <property type="gene designation" value="WRKY75"/>
</dbReference>
<dbReference type="eggNOG" id="ENOG502RZAJ">
    <property type="taxonomic scope" value="Eukaryota"/>
</dbReference>
<dbReference type="HOGENOM" id="CLU_073202_4_0_1"/>
<dbReference type="InParanoid" id="Q9FYA2"/>
<dbReference type="OMA" id="AFHTRSH"/>
<dbReference type="OrthoDB" id="1915472at2759"/>
<dbReference type="PhylomeDB" id="Q9FYA2"/>
<dbReference type="PRO" id="PR:Q9FYA2"/>
<dbReference type="Proteomes" id="UP000006548">
    <property type="component" value="Chromosome 5"/>
</dbReference>
<dbReference type="ExpressionAtlas" id="Q9FYA2">
    <property type="expression patterns" value="baseline and differential"/>
</dbReference>
<dbReference type="GO" id="GO:0005634">
    <property type="term" value="C:nucleus"/>
    <property type="evidence" value="ECO:0000314"/>
    <property type="project" value="TAIR"/>
</dbReference>
<dbReference type="GO" id="GO:0003700">
    <property type="term" value="F:DNA-binding transcription factor activity"/>
    <property type="evidence" value="ECO:0000250"/>
    <property type="project" value="TAIR"/>
</dbReference>
<dbReference type="GO" id="GO:0000978">
    <property type="term" value="F:RNA polymerase II cis-regulatory region sequence-specific DNA binding"/>
    <property type="evidence" value="ECO:0000353"/>
    <property type="project" value="TAIR"/>
</dbReference>
<dbReference type="GO" id="GO:0000976">
    <property type="term" value="F:transcription cis-regulatory region binding"/>
    <property type="evidence" value="ECO:0000353"/>
    <property type="project" value="TAIR"/>
</dbReference>
<dbReference type="GO" id="GO:0010055">
    <property type="term" value="P:atrichoblast differentiation"/>
    <property type="evidence" value="ECO:0000315"/>
    <property type="project" value="TAIR"/>
</dbReference>
<dbReference type="GO" id="GO:0048527">
    <property type="term" value="P:lateral root development"/>
    <property type="evidence" value="ECO:0000315"/>
    <property type="project" value="TAIR"/>
</dbReference>
<dbReference type="GO" id="GO:0000122">
    <property type="term" value="P:negative regulation of transcription by RNA polymerase II"/>
    <property type="evidence" value="ECO:0000315"/>
    <property type="project" value="TAIR"/>
</dbReference>
<dbReference type="GO" id="GO:0032107">
    <property type="term" value="P:regulation of response to nutrient levels"/>
    <property type="evidence" value="ECO:0000315"/>
    <property type="project" value="TAIR"/>
</dbReference>
<dbReference type="FunFam" id="2.20.25.80:FF:000003">
    <property type="entry name" value="WRKY transcription factor 57"/>
    <property type="match status" value="1"/>
</dbReference>
<dbReference type="Gene3D" id="2.20.25.80">
    <property type="entry name" value="WRKY domain"/>
    <property type="match status" value="1"/>
</dbReference>
<dbReference type="InterPro" id="IPR003657">
    <property type="entry name" value="WRKY_dom"/>
</dbReference>
<dbReference type="InterPro" id="IPR036576">
    <property type="entry name" value="WRKY_dom_sf"/>
</dbReference>
<dbReference type="InterPro" id="IPR044810">
    <property type="entry name" value="WRKY_plant"/>
</dbReference>
<dbReference type="PANTHER" id="PTHR31221:SF83">
    <property type="entry name" value="WRKY TRANSCRIPTION FACTOR 75-RELATED"/>
    <property type="match status" value="1"/>
</dbReference>
<dbReference type="PANTHER" id="PTHR31221">
    <property type="entry name" value="WRKY TRANSCRIPTION FACTOR PROTEIN 1-RELATED"/>
    <property type="match status" value="1"/>
</dbReference>
<dbReference type="Pfam" id="PF03106">
    <property type="entry name" value="WRKY"/>
    <property type="match status" value="1"/>
</dbReference>
<dbReference type="SMART" id="SM00774">
    <property type="entry name" value="WRKY"/>
    <property type="match status" value="1"/>
</dbReference>
<dbReference type="SUPFAM" id="SSF118290">
    <property type="entry name" value="WRKY DNA-binding domain"/>
    <property type="match status" value="1"/>
</dbReference>
<dbReference type="PROSITE" id="PS50811">
    <property type="entry name" value="WRKY"/>
    <property type="match status" value="1"/>
</dbReference>
<gene>
    <name type="primary">WRKY75</name>
    <name type="ordered locus">At5g13080</name>
    <name type="ORF">T19L5.40</name>
</gene>
<evidence type="ECO:0000250" key="1"/>
<evidence type="ECO:0000255" key="2">
    <source>
        <dbReference type="PROSITE-ProRule" id="PRU00223"/>
    </source>
</evidence>
<evidence type="ECO:0000256" key="3">
    <source>
        <dbReference type="SAM" id="MobiDB-lite"/>
    </source>
</evidence>
<evidence type="ECO:0000305" key="4"/>
<keyword id="KW-0238">DNA-binding</keyword>
<keyword id="KW-0539">Nucleus</keyword>
<keyword id="KW-1185">Reference proteome</keyword>
<keyword id="KW-0804">Transcription</keyword>
<keyword id="KW-0805">Transcription regulation</keyword>
<sequence>MEGYDNGSLYAPFLSLKSHSKPELHQGEEESSKVRSEGCSKSVESSKKKGKKQRYAFQTRSQVDILDDGYRWRKYGQKAVKNNKFPRSYYRCTYGGCNVKKQVQRLTVDQEVVVTTYEGVHSHPIEKSTENFEHILTQMQIYSSF</sequence>
<name>WRK75_ARATH</name>
<comment type="function">
    <text evidence="1">Transcription factor. Interacts specifically with the W box (5'-(T)TGAC[CT]-3'), a frequently occurring elicitor-responsive cis-acting element (By similarity).</text>
</comment>
<comment type="interaction">
    <interactant intactId="EBI-4427645">
        <id>Q9FYA2</id>
    </interactant>
    <interactant intactId="EBI-15192297">
        <id>Q9LQF0</id>
        <label>TCP23</label>
    </interactant>
    <organismsDiffer>false</organismsDiffer>
    <experiments>3</experiments>
</comment>
<comment type="subcellular location">
    <subcellularLocation>
        <location evidence="4">Nucleus</location>
    </subcellularLocation>
</comment>
<comment type="similarity">
    <text evidence="4">Belongs to the WRKY group II-c family.</text>
</comment>
<organism>
    <name type="scientific">Arabidopsis thaliana</name>
    <name type="common">Mouse-ear cress</name>
    <dbReference type="NCBI Taxonomy" id="3702"/>
    <lineage>
        <taxon>Eukaryota</taxon>
        <taxon>Viridiplantae</taxon>
        <taxon>Streptophyta</taxon>
        <taxon>Embryophyta</taxon>
        <taxon>Tracheophyta</taxon>
        <taxon>Spermatophyta</taxon>
        <taxon>Magnoliopsida</taxon>
        <taxon>eudicotyledons</taxon>
        <taxon>Gunneridae</taxon>
        <taxon>Pentapetalae</taxon>
        <taxon>rosids</taxon>
        <taxon>malvids</taxon>
        <taxon>Brassicales</taxon>
        <taxon>Brassicaceae</taxon>
        <taxon>Camelineae</taxon>
        <taxon>Arabidopsis</taxon>
    </lineage>
</organism>